<feature type="chain" id="PRO_1000146941" description="Ribosomal protein bS6--L-glutamate ligase">
    <location>
        <begin position="1"/>
        <end position="300"/>
    </location>
</feature>
<feature type="domain" description="ATP-grasp" evidence="1">
    <location>
        <begin position="104"/>
        <end position="287"/>
    </location>
</feature>
<feature type="binding site" evidence="1">
    <location>
        <position position="141"/>
    </location>
    <ligand>
        <name>ATP</name>
        <dbReference type="ChEBI" id="CHEBI:30616"/>
    </ligand>
</feature>
<feature type="binding site" evidence="1">
    <location>
        <begin position="178"/>
        <end position="179"/>
    </location>
    <ligand>
        <name>ATP</name>
        <dbReference type="ChEBI" id="CHEBI:30616"/>
    </ligand>
</feature>
<feature type="binding site" evidence="1">
    <location>
        <position position="187"/>
    </location>
    <ligand>
        <name>ATP</name>
        <dbReference type="ChEBI" id="CHEBI:30616"/>
    </ligand>
</feature>
<feature type="binding site" evidence="1">
    <location>
        <begin position="211"/>
        <end position="213"/>
    </location>
    <ligand>
        <name>ATP</name>
        <dbReference type="ChEBI" id="CHEBI:30616"/>
    </ligand>
</feature>
<feature type="binding site" evidence="1">
    <location>
        <position position="248"/>
    </location>
    <ligand>
        <name>Mg(2+)</name>
        <dbReference type="ChEBI" id="CHEBI:18420"/>
        <label>1</label>
    </ligand>
</feature>
<feature type="binding site" evidence="1">
    <location>
        <position position="248"/>
    </location>
    <ligand>
        <name>Mn(2+)</name>
        <dbReference type="ChEBI" id="CHEBI:29035"/>
        <label>1</label>
    </ligand>
</feature>
<feature type="binding site" evidence="1">
    <location>
        <position position="260"/>
    </location>
    <ligand>
        <name>Mg(2+)</name>
        <dbReference type="ChEBI" id="CHEBI:18420"/>
        <label>1</label>
    </ligand>
</feature>
<feature type="binding site" evidence="1">
    <location>
        <position position="260"/>
    </location>
    <ligand>
        <name>Mg(2+)</name>
        <dbReference type="ChEBI" id="CHEBI:18420"/>
        <label>2</label>
    </ligand>
</feature>
<feature type="binding site" evidence="1">
    <location>
        <position position="260"/>
    </location>
    <ligand>
        <name>Mn(2+)</name>
        <dbReference type="ChEBI" id="CHEBI:29035"/>
        <label>1</label>
    </ligand>
</feature>
<feature type="binding site" evidence="1">
    <location>
        <position position="260"/>
    </location>
    <ligand>
        <name>Mn(2+)</name>
        <dbReference type="ChEBI" id="CHEBI:29035"/>
        <label>2</label>
    </ligand>
</feature>
<feature type="binding site" evidence="1">
    <location>
        <position position="262"/>
    </location>
    <ligand>
        <name>Mg(2+)</name>
        <dbReference type="ChEBI" id="CHEBI:18420"/>
        <label>2</label>
    </ligand>
</feature>
<feature type="binding site" evidence="1">
    <location>
        <position position="262"/>
    </location>
    <ligand>
        <name>Mn(2+)</name>
        <dbReference type="ChEBI" id="CHEBI:29035"/>
        <label>2</label>
    </ligand>
</feature>
<keyword id="KW-0067">ATP-binding</keyword>
<keyword id="KW-0436">Ligase</keyword>
<keyword id="KW-0460">Magnesium</keyword>
<keyword id="KW-0464">Manganese</keyword>
<keyword id="KW-0479">Metal-binding</keyword>
<keyword id="KW-0547">Nucleotide-binding</keyword>
<keyword id="KW-0648">Protein biosynthesis</keyword>
<evidence type="ECO:0000255" key="1">
    <source>
        <dbReference type="HAMAP-Rule" id="MF_01552"/>
    </source>
</evidence>
<gene>
    <name evidence="1" type="primary">rimK</name>
    <name type="ordered locus">SeAg_B0912</name>
</gene>
<sequence>MKIAILSRDGTLYSCKRLREAAMRRGHLVEILDPLSCYMNINPAASSIHYKGRRLPHFDAVIPRIGSAITFYGTAALRQFELLGSYPLNESVAITRARDKLRSLQLLARQGIDLPITGIAHSPDDTSDLIKMVGGAPLVVKLVEGTQGIGVVLAETRQAAESVIDAFRGLNAHILVQEYIAEAKGCDIRCLVVGNEVVAAIERCAKAGDFRSNLHRGGVASIATITPRERDIAIKAAQTLGLDVAGVDILRAARGPLVMEVNASPGLEGIEKTTGVDIAGRMIQWIERHATPEFCLKIGG</sequence>
<dbReference type="EC" id="6.3.2.-" evidence="1"/>
<dbReference type="EMBL" id="CP001138">
    <property type="protein sequence ID" value="ACH49327.1"/>
    <property type="molecule type" value="Genomic_DNA"/>
</dbReference>
<dbReference type="RefSeq" id="WP_000684361.1">
    <property type="nucleotide sequence ID" value="NC_011149.1"/>
</dbReference>
<dbReference type="SMR" id="B5F0Z4"/>
<dbReference type="KEGG" id="sea:SeAg_B0912"/>
<dbReference type="HOGENOM" id="CLU_054353_0_1_6"/>
<dbReference type="Proteomes" id="UP000008819">
    <property type="component" value="Chromosome"/>
</dbReference>
<dbReference type="GO" id="GO:0005737">
    <property type="term" value="C:cytoplasm"/>
    <property type="evidence" value="ECO:0007669"/>
    <property type="project" value="TreeGrafter"/>
</dbReference>
<dbReference type="GO" id="GO:0005524">
    <property type="term" value="F:ATP binding"/>
    <property type="evidence" value="ECO:0007669"/>
    <property type="project" value="UniProtKB-UniRule"/>
</dbReference>
<dbReference type="GO" id="GO:0046872">
    <property type="term" value="F:metal ion binding"/>
    <property type="evidence" value="ECO:0007669"/>
    <property type="project" value="UniProtKB-KW"/>
</dbReference>
<dbReference type="GO" id="GO:0018169">
    <property type="term" value="F:ribosomal S6-glutamic acid ligase activity"/>
    <property type="evidence" value="ECO:0007669"/>
    <property type="project" value="UniProtKB-UniRule"/>
</dbReference>
<dbReference type="GO" id="GO:0036211">
    <property type="term" value="P:protein modification process"/>
    <property type="evidence" value="ECO:0007669"/>
    <property type="project" value="InterPro"/>
</dbReference>
<dbReference type="GO" id="GO:0009432">
    <property type="term" value="P:SOS response"/>
    <property type="evidence" value="ECO:0007669"/>
    <property type="project" value="TreeGrafter"/>
</dbReference>
<dbReference type="GO" id="GO:0006412">
    <property type="term" value="P:translation"/>
    <property type="evidence" value="ECO:0007669"/>
    <property type="project" value="UniProtKB-KW"/>
</dbReference>
<dbReference type="FunFam" id="3.40.50.20:FF:000004">
    <property type="entry name" value="Probable alpha-L-glutamate ligase"/>
    <property type="match status" value="1"/>
</dbReference>
<dbReference type="FunFam" id="3.30.1490.20:FF:000005">
    <property type="entry name" value="Probable alpha-L-glutamate ligase 1"/>
    <property type="match status" value="1"/>
</dbReference>
<dbReference type="FunFam" id="3.30.470.20:FF:000016">
    <property type="entry name" value="Ribosomal protein S6--L-glutamate ligase"/>
    <property type="match status" value="1"/>
</dbReference>
<dbReference type="Gene3D" id="3.40.50.20">
    <property type="match status" value="1"/>
</dbReference>
<dbReference type="Gene3D" id="3.30.1490.20">
    <property type="entry name" value="ATP-grasp fold, A domain"/>
    <property type="match status" value="1"/>
</dbReference>
<dbReference type="Gene3D" id="3.30.470.20">
    <property type="entry name" value="ATP-grasp fold, B domain"/>
    <property type="match status" value="1"/>
</dbReference>
<dbReference type="HAMAP" id="MF_01552">
    <property type="entry name" value="RimK"/>
    <property type="match status" value="1"/>
</dbReference>
<dbReference type="InterPro" id="IPR011761">
    <property type="entry name" value="ATP-grasp"/>
</dbReference>
<dbReference type="InterPro" id="IPR013651">
    <property type="entry name" value="ATP-grasp_RimK-type"/>
</dbReference>
<dbReference type="InterPro" id="IPR013815">
    <property type="entry name" value="ATP_grasp_subdomain_1"/>
</dbReference>
<dbReference type="InterPro" id="IPR023533">
    <property type="entry name" value="RimK"/>
</dbReference>
<dbReference type="InterPro" id="IPR041107">
    <property type="entry name" value="Rimk_N"/>
</dbReference>
<dbReference type="InterPro" id="IPR004666">
    <property type="entry name" value="Rp_bS6_RimK/Lys_biosynth_LsyX"/>
</dbReference>
<dbReference type="NCBIfam" id="NF007764">
    <property type="entry name" value="PRK10446.1"/>
    <property type="match status" value="1"/>
</dbReference>
<dbReference type="NCBIfam" id="TIGR00768">
    <property type="entry name" value="rimK_fam"/>
    <property type="match status" value="1"/>
</dbReference>
<dbReference type="PANTHER" id="PTHR21621:SF7">
    <property type="entry name" value="RIBOSOMAL PROTEIN BS6--L-GLUTAMATE LIGASE"/>
    <property type="match status" value="1"/>
</dbReference>
<dbReference type="PANTHER" id="PTHR21621">
    <property type="entry name" value="RIBOSOMAL PROTEIN S6 MODIFICATION PROTEIN"/>
    <property type="match status" value="1"/>
</dbReference>
<dbReference type="Pfam" id="PF08443">
    <property type="entry name" value="RimK"/>
    <property type="match status" value="1"/>
</dbReference>
<dbReference type="Pfam" id="PF18030">
    <property type="entry name" value="Rimk_N"/>
    <property type="match status" value="1"/>
</dbReference>
<dbReference type="SUPFAM" id="SSF56059">
    <property type="entry name" value="Glutathione synthetase ATP-binding domain-like"/>
    <property type="match status" value="1"/>
</dbReference>
<dbReference type="PROSITE" id="PS50975">
    <property type="entry name" value="ATP_GRASP"/>
    <property type="match status" value="1"/>
</dbReference>
<comment type="function">
    <text evidence="1">An L-glutamate ligase that catalyzes the ATP-dependent post-translational addition of glutamate residues to the C-terminus of ribosomal protein bS6 (RpsF). Is also able to catalyze the synthesis of poly-alpha-glutamate in vitro, via ATP hydrolysis from unprotected glutamate as substrate. The number of glutamate residues added to either RpsF or to poly-alpha-glutamate changes with pH.</text>
</comment>
<comment type="cofactor">
    <cofactor evidence="1">
        <name>Mg(2+)</name>
        <dbReference type="ChEBI" id="CHEBI:18420"/>
    </cofactor>
    <cofactor evidence="1">
        <name>Mn(2+)</name>
        <dbReference type="ChEBI" id="CHEBI:29035"/>
    </cofactor>
    <text evidence="1">Binds 2 magnesium or manganese ions per subunit.</text>
</comment>
<comment type="similarity">
    <text evidence="1">Belongs to the RimK family.</text>
</comment>
<protein>
    <recommendedName>
        <fullName evidence="1">Ribosomal protein bS6--L-glutamate ligase</fullName>
        <ecNumber evidence="1">6.3.2.-</ecNumber>
    </recommendedName>
    <alternativeName>
        <fullName evidence="1">Poly-alpha-glutamate synthase</fullName>
    </alternativeName>
    <alternativeName>
        <fullName evidence="1">Ribosomal protein bS6 modification protein</fullName>
    </alternativeName>
</protein>
<organism>
    <name type="scientific">Salmonella agona (strain SL483)</name>
    <dbReference type="NCBI Taxonomy" id="454166"/>
    <lineage>
        <taxon>Bacteria</taxon>
        <taxon>Pseudomonadati</taxon>
        <taxon>Pseudomonadota</taxon>
        <taxon>Gammaproteobacteria</taxon>
        <taxon>Enterobacterales</taxon>
        <taxon>Enterobacteriaceae</taxon>
        <taxon>Salmonella</taxon>
    </lineage>
</organism>
<reference key="1">
    <citation type="journal article" date="2011" name="J. Bacteriol.">
        <title>Comparative genomics of 28 Salmonella enterica isolates: evidence for CRISPR-mediated adaptive sublineage evolution.</title>
        <authorList>
            <person name="Fricke W.F."/>
            <person name="Mammel M.K."/>
            <person name="McDermott P.F."/>
            <person name="Tartera C."/>
            <person name="White D.G."/>
            <person name="Leclerc J.E."/>
            <person name="Ravel J."/>
            <person name="Cebula T.A."/>
        </authorList>
    </citation>
    <scope>NUCLEOTIDE SEQUENCE [LARGE SCALE GENOMIC DNA]</scope>
    <source>
        <strain>SL483</strain>
    </source>
</reference>
<proteinExistence type="inferred from homology"/>
<name>RIMK_SALA4</name>
<accession>B5F0Z4</accession>